<name>Y1627_SHELP</name>
<reference key="1">
    <citation type="submission" date="2007-03" db="EMBL/GenBank/DDBJ databases">
        <title>Complete sequence of Shewanella loihica PV-4.</title>
        <authorList>
            <consortium name="US DOE Joint Genome Institute"/>
            <person name="Copeland A."/>
            <person name="Lucas S."/>
            <person name="Lapidus A."/>
            <person name="Barry K."/>
            <person name="Detter J.C."/>
            <person name="Glavina del Rio T."/>
            <person name="Hammon N."/>
            <person name="Israni S."/>
            <person name="Dalin E."/>
            <person name="Tice H."/>
            <person name="Pitluck S."/>
            <person name="Chain P."/>
            <person name="Malfatti S."/>
            <person name="Shin M."/>
            <person name="Vergez L."/>
            <person name="Schmutz J."/>
            <person name="Larimer F."/>
            <person name="Land M."/>
            <person name="Hauser L."/>
            <person name="Kyrpides N."/>
            <person name="Mikhailova N."/>
            <person name="Romine M.F."/>
            <person name="Serres G."/>
            <person name="Fredrickson J."/>
            <person name="Tiedje J."/>
            <person name="Richardson P."/>
        </authorList>
    </citation>
    <scope>NUCLEOTIDE SEQUENCE [LARGE SCALE GENOMIC DNA]</scope>
    <source>
        <strain>ATCC BAA-1088 / PV-4</strain>
    </source>
</reference>
<proteinExistence type="inferred from homology"/>
<keyword id="KW-1185">Reference proteome</keyword>
<feature type="chain" id="PRO_1000064298" description="UPF0227 protein Shew_1627">
    <location>
        <begin position="1"/>
        <end position="180"/>
    </location>
</feature>
<organism>
    <name type="scientific">Shewanella loihica (strain ATCC BAA-1088 / PV-4)</name>
    <dbReference type="NCBI Taxonomy" id="323850"/>
    <lineage>
        <taxon>Bacteria</taxon>
        <taxon>Pseudomonadati</taxon>
        <taxon>Pseudomonadota</taxon>
        <taxon>Gammaproteobacteria</taxon>
        <taxon>Alteromonadales</taxon>
        <taxon>Shewanellaceae</taxon>
        <taxon>Shewanella</taxon>
    </lineage>
</organism>
<comment type="similarity">
    <text evidence="1">Belongs to the UPF0227 family.</text>
</comment>
<dbReference type="EMBL" id="CP000606">
    <property type="protein sequence ID" value="ABO23494.1"/>
    <property type="molecule type" value="Genomic_DNA"/>
</dbReference>
<dbReference type="RefSeq" id="WP_011865426.1">
    <property type="nucleotide sequence ID" value="NC_009092.1"/>
</dbReference>
<dbReference type="SMR" id="A3QDE6"/>
<dbReference type="STRING" id="323850.Shew_1627"/>
<dbReference type="ESTHER" id="9gamm-q33pz4">
    <property type="family name" value="abh_upf00227"/>
</dbReference>
<dbReference type="KEGG" id="slo:Shew_1627"/>
<dbReference type="eggNOG" id="COG3150">
    <property type="taxonomic scope" value="Bacteria"/>
</dbReference>
<dbReference type="HOGENOM" id="CLU_128769_0_0_6"/>
<dbReference type="OrthoDB" id="6469735at2"/>
<dbReference type="Proteomes" id="UP000001558">
    <property type="component" value="Chromosome"/>
</dbReference>
<dbReference type="Gene3D" id="3.40.50.1820">
    <property type="entry name" value="alpha/beta hydrolase"/>
    <property type="match status" value="1"/>
</dbReference>
<dbReference type="HAMAP" id="MF_01047">
    <property type="entry name" value="UPF0227"/>
    <property type="match status" value="1"/>
</dbReference>
<dbReference type="InterPro" id="IPR029058">
    <property type="entry name" value="AB_hydrolase_fold"/>
</dbReference>
<dbReference type="InterPro" id="IPR022987">
    <property type="entry name" value="UPF0227"/>
</dbReference>
<dbReference type="InterPro" id="IPR008886">
    <property type="entry name" value="UPF0227/Esterase_YqiA"/>
</dbReference>
<dbReference type="NCBIfam" id="NF003431">
    <property type="entry name" value="PRK04940.1"/>
    <property type="match status" value="1"/>
</dbReference>
<dbReference type="PANTHER" id="PTHR35602">
    <property type="entry name" value="ESTERASE YQIA-RELATED"/>
    <property type="match status" value="1"/>
</dbReference>
<dbReference type="PANTHER" id="PTHR35602:SF2">
    <property type="entry name" value="UPF0227 PROTEIN YCFP"/>
    <property type="match status" value="1"/>
</dbReference>
<dbReference type="Pfam" id="PF05728">
    <property type="entry name" value="UPF0227"/>
    <property type="match status" value="1"/>
</dbReference>
<sequence>MILYFHGFDATSPGNHEKMRQLQFVDPDVRLISYSTLHPKYDMQYLLNEVSRQLTQSDDPAPLAIGVGLGGYWAERIGFLNGLKTVMINPNLHPEDNMLGKIDRPEEYADIASKCVSQFREKHKGRGMCILSRQDEVHDNQAVASILAPFYPIVWDEEQRHKFPSLAAHLAEIKAFKEQQ</sequence>
<evidence type="ECO:0000255" key="1">
    <source>
        <dbReference type="HAMAP-Rule" id="MF_01047"/>
    </source>
</evidence>
<protein>
    <recommendedName>
        <fullName evidence="1">UPF0227 protein Shew_1627</fullName>
    </recommendedName>
</protein>
<gene>
    <name type="ordered locus">Shew_1627</name>
</gene>
<accession>A3QDE6</accession>